<organism>
    <name type="scientific">Salmonella typhimurium (strain LT2 / SGSC1412 / ATCC 700720)</name>
    <dbReference type="NCBI Taxonomy" id="99287"/>
    <lineage>
        <taxon>Bacteria</taxon>
        <taxon>Pseudomonadati</taxon>
        <taxon>Pseudomonadota</taxon>
        <taxon>Gammaproteobacteria</taxon>
        <taxon>Enterobacterales</taxon>
        <taxon>Enterobacteriaceae</taxon>
        <taxon>Salmonella</taxon>
    </lineage>
</organism>
<protein>
    <recommendedName>
        <fullName evidence="1">Diaminopimelate epimerase</fullName>
        <shortName evidence="1">DAP epimerase</shortName>
        <ecNumber evidence="1">5.1.1.7</ecNumber>
    </recommendedName>
    <alternativeName>
        <fullName evidence="1">PLP-independent amino acid racemase</fullName>
    </alternativeName>
</protein>
<dbReference type="EC" id="5.1.1.7" evidence="1"/>
<dbReference type="EMBL" id="AF233324">
    <property type="protein sequence ID" value="AAF33445.1"/>
    <property type="status" value="ALT_INIT"/>
    <property type="molecule type" value="Genomic_DNA"/>
</dbReference>
<dbReference type="EMBL" id="AE006468">
    <property type="protein sequence ID" value="AAL22791.1"/>
    <property type="status" value="ALT_INIT"/>
    <property type="molecule type" value="Genomic_DNA"/>
</dbReference>
<dbReference type="RefSeq" id="NP_462832.3">
    <property type="nucleotide sequence ID" value="NC_003197.2"/>
</dbReference>
<dbReference type="RefSeq" id="WP_001576444.1">
    <property type="nucleotide sequence ID" value="NC_003197.2"/>
</dbReference>
<dbReference type="SMR" id="P0A1F2"/>
<dbReference type="STRING" id="99287.STM3947"/>
<dbReference type="PaxDb" id="99287-STM3947"/>
<dbReference type="GeneID" id="1255473"/>
<dbReference type="KEGG" id="stm:STM3947"/>
<dbReference type="PATRIC" id="fig|99287.12.peg.4165"/>
<dbReference type="HOGENOM" id="CLU_053306_1_1_6"/>
<dbReference type="OMA" id="GIRCFAR"/>
<dbReference type="PhylomeDB" id="P0A1F2"/>
<dbReference type="UniPathway" id="UPA00034">
    <property type="reaction ID" value="UER00025"/>
</dbReference>
<dbReference type="Proteomes" id="UP000001014">
    <property type="component" value="Chromosome"/>
</dbReference>
<dbReference type="GO" id="GO:0005829">
    <property type="term" value="C:cytosol"/>
    <property type="evidence" value="ECO:0000318"/>
    <property type="project" value="GO_Central"/>
</dbReference>
<dbReference type="GO" id="GO:0008837">
    <property type="term" value="F:diaminopimelate epimerase activity"/>
    <property type="evidence" value="ECO:0000318"/>
    <property type="project" value="GO_Central"/>
</dbReference>
<dbReference type="GO" id="GO:0009089">
    <property type="term" value="P:lysine biosynthetic process via diaminopimelate"/>
    <property type="evidence" value="ECO:0000318"/>
    <property type="project" value="GO_Central"/>
</dbReference>
<dbReference type="FunFam" id="3.10.310.10:FF:000001">
    <property type="entry name" value="Diaminopimelate epimerase"/>
    <property type="match status" value="1"/>
</dbReference>
<dbReference type="FunFam" id="3.10.310.10:FF:000002">
    <property type="entry name" value="Diaminopimelate epimerase"/>
    <property type="match status" value="1"/>
</dbReference>
<dbReference type="Gene3D" id="3.10.310.10">
    <property type="entry name" value="Diaminopimelate Epimerase, Chain A, domain 1"/>
    <property type="match status" value="2"/>
</dbReference>
<dbReference type="HAMAP" id="MF_00197">
    <property type="entry name" value="DAP_epimerase"/>
    <property type="match status" value="1"/>
</dbReference>
<dbReference type="InterPro" id="IPR018510">
    <property type="entry name" value="DAP_epimerase_AS"/>
</dbReference>
<dbReference type="InterPro" id="IPR001653">
    <property type="entry name" value="DAP_epimerase_DapF"/>
</dbReference>
<dbReference type="NCBIfam" id="TIGR00652">
    <property type="entry name" value="DapF"/>
    <property type="match status" value="1"/>
</dbReference>
<dbReference type="PANTHER" id="PTHR31689:SF0">
    <property type="entry name" value="DIAMINOPIMELATE EPIMERASE"/>
    <property type="match status" value="1"/>
</dbReference>
<dbReference type="PANTHER" id="PTHR31689">
    <property type="entry name" value="DIAMINOPIMELATE EPIMERASE, CHLOROPLASTIC"/>
    <property type="match status" value="1"/>
</dbReference>
<dbReference type="Pfam" id="PF01678">
    <property type="entry name" value="DAP_epimerase"/>
    <property type="match status" value="2"/>
</dbReference>
<dbReference type="SUPFAM" id="SSF54506">
    <property type="entry name" value="Diaminopimelate epimerase-like"/>
    <property type="match status" value="1"/>
</dbReference>
<dbReference type="PROSITE" id="PS01326">
    <property type="entry name" value="DAP_EPIMERASE"/>
    <property type="match status" value="1"/>
</dbReference>
<proteinExistence type="inferred from homology"/>
<accession>P0A1F2</accession>
<accession>Q9L6P6</accession>
<sequence length="274" mass="30337">MQFSKMHGLGNDFMVVDAVTQNVFFSPELIRRLSDRHLGVGFDQLLVVEPPYDPELDFHYRIFNADGSEVSQCGNGARCFARFVRLKGLTNKRDIRVSTANGRMVLSVTEDELVRVNMGEPNFEPAQVPFRANKAEKTYIMRAAEQTILCGVVSMGNPHCVIQVDNVDTAAVETLGPVLESHERFPERANIGFMQVVRREHIRLRVYERGAGETRACGSGACAAVAVGIQQGLLAEEVRVELPGGRLDIAWKGPGHPLYMTGPAAHIYDGFIHL</sequence>
<comment type="function">
    <text evidence="1">Catalyzes the stereoinversion of LL-2,6-diaminopimelate (L,L-DAP) to meso-diaminopimelate (meso-DAP), a precursor of L-lysine and an essential component of the bacterial peptidoglycan.</text>
</comment>
<comment type="catalytic activity">
    <reaction evidence="1">
        <text>(2S,6S)-2,6-diaminopimelate = meso-2,6-diaminopimelate</text>
        <dbReference type="Rhea" id="RHEA:15393"/>
        <dbReference type="ChEBI" id="CHEBI:57609"/>
        <dbReference type="ChEBI" id="CHEBI:57791"/>
        <dbReference type="EC" id="5.1.1.7"/>
    </reaction>
</comment>
<comment type="pathway">
    <text evidence="1">Amino-acid biosynthesis; L-lysine biosynthesis via DAP pathway; DL-2,6-diaminopimelate from LL-2,6-diaminopimelate: step 1/1.</text>
</comment>
<comment type="subunit">
    <text evidence="1">Homodimer.</text>
</comment>
<comment type="subcellular location">
    <subcellularLocation>
        <location evidence="1">Cytoplasm</location>
    </subcellularLocation>
</comment>
<comment type="similarity">
    <text evidence="1">Belongs to the diaminopimelate epimerase family.</text>
</comment>
<comment type="sequence caution" evidence="2">
    <conflict type="erroneous initiation">
        <sequence resource="EMBL-CDS" id="AAF33445"/>
    </conflict>
    <text>Extended N-terminus.</text>
</comment>
<comment type="sequence caution" evidence="2">
    <conflict type="erroneous initiation">
        <sequence resource="EMBL-CDS" id="AAL22791"/>
    </conflict>
    <text>Extended N-terminus.</text>
</comment>
<feature type="chain" id="PRO_0000149869" description="Diaminopimelate epimerase">
    <location>
        <begin position="1"/>
        <end position="274"/>
    </location>
</feature>
<feature type="active site" description="Proton donor" evidence="1">
    <location>
        <position position="73"/>
    </location>
</feature>
<feature type="active site" description="Proton acceptor" evidence="1">
    <location>
        <position position="217"/>
    </location>
</feature>
<feature type="binding site" evidence="1">
    <location>
        <position position="11"/>
    </location>
    <ligand>
        <name>substrate</name>
    </ligand>
</feature>
<feature type="binding site" evidence="1">
    <location>
        <position position="44"/>
    </location>
    <ligand>
        <name>substrate</name>
    </ligand>
</feature>
<feature type="binding site" evidence="1">
    <location>
        <position position="64"/>
    </location>
    <ligand>
        <name>substrate</name>
    </ligand>
</feature>
<feature type="binding site" evidence="1">
    <location>
        <begin position="74"/>
        <end position="75"/>
    </location>
    <ligand>
        <name>substrate</name>
    </ligand>
</feature>
<feature type="binding site" evidence="1">
    <location>
        <position position="157"/>
    </location>
    <ligand>
        <name>substrate</name>
    </ligand>
</feature>
<feature type="binding site" evidence="1">
    <location>
        <position position="190"/>
    </location>
    <ligand>
        <name>substrate</name>
    </ligand>
</feature>
<feature type="binding site" evidence="1">
    <location>
        <begin position="208"/>
        <end position="209"/>
    </location>
    <ligand>
        <name>substrate</name>
    </ligand>
</feature>
<feature type="binding site" evidence="1">
    <location>
        <begin position="218"/>
        <end position="219"/>
    </location>
    <ligand>
        <name>substrate</name>
    </ligand>
</feature>
<feature type="site" description="Could be important to modulate the pK values of the two catalytic cysteine residues" evidence="1">
    <location>
        <position position="159"/>
    </location>
</feature>
<feature type="site" description="Could be important to modulate the pK values of the two catalytic cysteine residues" evidence="1">
    <location>
        <position position="208"/>
    </location>
</feature>
<feature type="site" description="Important for dimerization" evidence="1">
    <location>
        <position position="268"/>
    </location>
</feature>
<keyword id="KW-0028">Amino-acid biosynthesis</keyword>
<keyword id="KW-0963">Cytoplasm</keyword>
<keyword id="KW-0413">Isomerase</keyword>
<keyword id="KW-0457">Lysine biosynthesis</keyword>
<keyword id="KW-1185">Reference proteome</keyword>
<name>DAPF_SALTY</name>
<gene>
    <name evidence="1" type="primary">dapF</name>
    <name type="ordered locus">STM3947</name>
    <name type="ORF">STMD1.43</name>
</gene>
<reference key="1">
    <citation type="journal article" date="2001" name="Nature">
        <title>Complete genome sequence of Salmonella enterica serovar Typhimurium LT2.</title>
        <authorList>
            <person name="McClelland M."/>
            <person name="Sanderson K.E."/>
            <person name="Spieth J."/>
            <person name="Clifton S.W."/>
            <person name="Latreille P."/>
            <person name="Courtney L."/>
            <person name="Porwollik S."/>
            <person name="Ali J."/>
            <person name="Dante M."/>
            <person name="Du F."/>
            <person name="Hou S."/>
            <person name="Layman D."/>
            <person name="Leonard S."/>
            <person name="Nguyen C."/>
            <person name="Scott K."/>
            <person name="Holmes A."/>
            <person name="Grewal N."/>
            <person name="Mulvaney E."/>
            <person name="Ryan E."/>
            <person name="Sun H."/>
            <person name="Florea L."/>
            <person name="Miller W."/>
            <person name="Stoneking T."/>
            <person name="Nhan M."/>
            <person name="Waterston R."/>
            <person name="Wilson R.K."/>
        </authorList>
    </citation>
    <scope>NUCLEOTIDE SEQUENCE [LARGE SCALE GENOMIC DNA]</scope>
    <source>
        <strain>LT2 / SGSC1412 / ATCC 700720</strain>
    </source>
</reference>
<evidence type="ECO:0000255" key="1">
    <source>
        <dbReference type="HAMAP-Rule" id="MF_00197"/>
    </source>
</evidence>
<evidence type="ECO:0000305" key="2"/>